<protein>
    <recommendedName>
        <fullName evidence="1">Phosphoenolpyruvate carboxylase</fullName>
        <shortName evidence="1">PEPC</shortName>
        <shortName evidence="1">PEPCase</shortName>
        <ecNumber evidence="1">4.1.1.31</ecNumber>
    </recommendedName>
</protein>
<name>CAPP_ECOL6</name>
<feature type="chain" id="PRO_0000166593" description="Phosphoenolpyruvate carboxylase">
    <location>
        <begin position="1"/>
        <end position="883"/>
    </location>
</feature>
<feature type="active site" evidence="1">
    <location>
        <position position="138"/>
    </location>
</feature>
<feature type="active site" evidence="1">
    <location>
        <position position="546"/>
    </location>
</feature>
<keyword id="KW-0120">Carbon dioxide fixation</keyword>
<keyword id="KW-0456">Lyase</keyword>
<keyword id="KW-0460">Magnesium</keyword>
<keyword id="KW-1185">Reference proteome</keyword>
<comment type="function">
    <text evidence="1">Forms oxaloacetate, a four-carbon dicarboxylic acid source for the tricarboxylic acid cycle.</text>
</comment>
<comment type="catalytic activity">
    <reaction evidence="1">
        <text>oxaloacetate + phosphate = phosphoenolpyruvate + hydrogencarbonate</text>
        <dbReference type="Rhea" id="RHEA:28370"/>
        <dbReference type="ChEBI" id="CHEBI:16452"/>
        <dbReference type="ChEBI" id="CHEBI:17544"/>
        <dbReference type="ChEBI" id="CHEBI:43474"/>
        <dbReference type="ChEBI" id="CHEBI:58702"/>
        <dbReference type="EC" id="4.1.1.31"/>
    </reaction>
</comment>
<comment type="cofactor">
    <cofactor evidence="1">
        <name>Mg(2+)</name>
        <dbReference type="ChEBI" id="CHEBI:18420"/>
    </cofactor>
</comment>
<comment type="similarity">
    <text evidence="1">Belongs to the PEPCase type 1 family.</text>
</comment>
<accession>Q8FB98</accession>
<dbReference type="EC" id="4.1.1.31" evidence="1"/>
<dbReference type="EMBL" id="AE014075">
    <property type="protein sequence ID" value="AAN83343.1"/>
    <property type="molecule type" value="Genomic_DNA"/>
</dbReference>
<dbReference type="RefSeq" id="WP_001005579.1">
    <property type="nucleotide sequence ID" value="NZ_CP051263.1"/>
</dbReference>
<dbReference type="SMR" id="Q8FB98"/>
<dbReference type="STRING" id="199310.c4915"/>
<dbReference type="GeneID" id="93777937"/>
<dbReference type="KEGG" id="ecc:c4915"/>
<dbReference type="eggNOG" id="COG2352">
    <property type="taxonomic scope" value="Bacteria"/>
</dbReference>
<dbReference type="HOGENOM" id="CLU_006557_2_0_6"/>
<dbReference type="BioCyc" id="ECOL199310:C4915-MONOMER"/>
<dbReference type="Proteomes" id="UP000001410">
    <property type="component" value="Chromosome"/>
</dbReference>
<dbReference type="GO" id="GO:0005829">
    <property type="term" value="C:cytosol"/>
    <property type="evidence" value="ECO:0007669"/>
    <property type="project" value="TreeGrafter"/>
</dbReference>
<dbReference type="GO" id="GO:0000287">
    <property type="term" value="F:magnesium ion binding"/>
    <property type="evidence" value="ECO:0007669"/>
    <property type="project" value="UniProtKB-UniRule"/>
</dbReference>
<dbReference type="GO" id="GO:0008964">
    <property type="term" value="F:phosphoenolpyruvate carboxylase activity"/>
    <property type="evidence" value="ECO:0007669"/>
    <property type="project" value="UniProtKB-UniRule"/>
</dbReference>
<dbReference type="GO" id="GO:0015977">
    <property type="term" value="P:carbon fixation"/>
    <property type="evidence" value="ECO:0007669"/>
    <property type="project" value="UniProtKB-UniRule"/>
</dbReference>
<dbReference type="GO" id="GO:0006107">
    <property type="term" value="P:oxaloacetate metabolic process"/>
    <property type="evidence" value="ECO:0007669"/>
    <property type="project" value="UniProtKB-UniRule"/>
</dbReference>
<dbReference type="GO" id="GO:0006099">
    <property type="term" value="P:tricarboxylic acid cycle"/>
    <property type="evidence" value="ECO:0007669"/>
    <property type="project" value="InterPro"/>
</dbReference>
<dbReference type="FunFam" id="1.20.1440.90:FF:000002">
    <property type="entry name" value="Phosphoenolpyruvate carboxylase"/>
    <property type="match status" value="1"/>
</dbReference>
<dbReference type="Gene3D" id="1.20.1440.90">
    <property type="entry name" value="Phosphoenolpyruvate/pyruvate domain"/>
    <property type="match status" value="1"/>
</dbReference>
<dbReference type="HAMAP" id="MF_00595">
    <property type="entry name" value="PEPcase_type1"/>
    <property type="match status" value="1"/>
</dbReference>
<dbReference type="InterPro" id="IPR021135">
    <property type="entry name" value="PEP_COase"/>
</dbReference>
<dbReference type="InterPro" id="IPR022805">
    <property type="entry name" value="PEP_COase_bac/pln-type"/>
</dbReference>
<dbReference type="InterPro" id="IPR018129">
    <property type="entry name" value="PEP_COase_Lys_AS"/>
</dbReference>
<dbReference type="InterPro" id="IPR033129">
    <property type="entry name" value="PEPCASE_His_AS"/>
</dbReference>
<dbReference type="InterPro" id="IPR015813">
    <property type="entry name" value="Pyrv/PenolPyrv_kinase-like_dom"/>
</dbReference>
<dbReference type="NCBIfam" id="NF000584">
    <property type="entry name" value="PRK00009.1"/>
    <property type="match status" value="1"/>
</dbReference>
<dbReference type="PANTHER" id="PTHR30523">
    <property type="entry name" value="PHOSPHOENOLPYRUVATE CARBOXYLASE"/>
    <property type="match status" value="1"/>
</dbReference>
<dbReference type="PANTHER" id="PTHR30523:SF6">
    <property type="entry name" value="PHOSPHOENOLPYRUVATE CARBOXYLASE"/>
    <property type="match status" value="1"/>
</dbReference>
<dbReference type="Pfam" id="PF00311">
    <property type="entry name" value="PEPcase"/>
    <property type="match status" value="1"/>
</dbReference>
<dbReference type="PRINTS" id="PR00150">
    <property type="entry name" value="PEPCARBXLASE"/>
</dbReference>
<dbReference type="SUPFAM" id="SSF51621">
    <property type="entry name" value="Phosphoenolpyruvate/pyruvate domain"/>
    <property type="match status" value="1"/>
</dbReference>
<dbReference type="PROSITE" id="PS00781">
    <property type="entry name" value="PEPCASE_1"/>
    <property type="match status" value="1"/>
</dbReference>
<dbReference type="PROSITE" id="PS00393">
    <property type="entry name" value="PEPCASE_2"/>
    <property type="match status" value="1"/>
</dbReference>
<gene>
    <name evidence="1" type="primary">ppc</name>
    <name type="ordered locus">c4915</name>
</gene>
<evidence type="ECO:0000255" key="1">
    <source>
        <dbReference type="HAMAP-Rule" id="MF_00595"/>
    </source>
</evidence>
<reference key="1">
    <citation type="journal article" date="2002" name="Proc. Natl. Acad. Sci. U.S.A.">
        <title>Extensive mosaic structure revealed by the complete genome sequence of uropathogenic Escherichia coli.</title>
        <authorList>
            <person name="Welch R.A."/>
            <person name="Burland V."/>
            <person name="Plunkett G. III"/>
            <person name="Redford P."/>
            <person name="Roesch P."/>
            <person name="Rasko D."/>
            <person name="Buckles E.L."/>
            <person name="Liou S.-R."/>
            <person name="Boutin A."/>
            <person name="Hackett J."/>
            <person name="Stroud D."/>
            <person name="Mayhew G.F."/>
            <person name="Rose D.J."/>
            <person name="Zhou S."/>
            <person name="Schwartz D.C."/>
            <person name="Perna N.T."/>
            <person name="Mobley H.L.T."/>
            <person name="Donnenberg M.S."/>
            <person name="Blattner F.R."/>
        </authorList>
    </citation>
    <scope>NUCLEOTIDE SEQUENCE [LARGE SCALE GENOMIC DNA]</scope>
    <source>
        <strain>CFT073 / ATCC 700928 / UPEC</strain>
    </source>
</reference>
<sequence>MNEQYSALRSNVSMLGKVLGETIKDALGEHILERVETIRKLSKSSRAGNDANRQELLTTLQNLSNDELLPVARAFSQFLNLANTAEQYHSISPKGEAASNPEVIARTLRKLKNQPELSEDTIKKAVESLSLELVLTAHPTEITRRTLIHKMVEVNACLKQLDNKDIADYEHNQLMRRLRQLIAQSWHTDEIRKLRPSPVDEAKWGFAVVENSLWQGVPNYLRELNEQLEENLGYKLPVEFVPVRFTSWMGGDRDGNPNVTADITRHVLLLSRWKATDLFLKDIQVLVSELSMVEATPELLALVGEEGAAEPYRYLMKNLRSRLMATQAWLEARLKGEELPKPEGLLTQNEELWEPLYACYQSLQACGMGIIANGDLLDTLRRVKCFGVPLVRIDIRQESTRHTEALGELTRYLGIGDYESWSEADKQAFLIRELNSKRPLLPRNWQPSAETREVLDTCQVIAEAPQGSIAAYVISMAKTPSDVLAVHLLLKEAGIGFAMPVAPLFETLDDLNNANDVMTQLLNIDWYRGLIQGKQMVMIGYSDSAKDAGVMAASWAQYQAQDALIKTCEKAGIELTLFHGRGGSIGRGGAPAHAALLSQPPGSLKGGLRVTEQGEMIRFKYGLPEITVSSLSLYTGAILEANLLPPPEPKESWRRIMDELSVISCDLYRGYVRENKDFVPYFRSATPEQELGKLPLGSRPAKRRPTGGVESLRAIPWIFAWTQNRLMLPAWLGAGTALQKVVEDGKQSELEAMCRDWPFFSTRLGMLEMVFAKADLWLAEYYDQRLVDKALWPLGKELRNLQEEDIKVVLAIANDSHLMADLPWIAESIQLRNIYTDPLNVLQAELLHRSRQAEKEGQEPDPRVEQALMVTIAGIAAGMRNTG</sequence>
<organism>
    <name type="scientific">Escherichia coli O6:H1 (strain CFT073 / ATCC 700928 / UPEC)</name>
    <dbReference type="NCBI Taxonomy" id="199310"/>
    <lineage>
        <taxon>Bacteria</taxon>
        <taxon>Pseudomonadati</taxon>
        <taxon>Pseudomonadota</taxon>
        <taxon>Gammaproteobacteria</taxon>
        <taxon>Enterobacterales</taxon>
        <taxon>Enterobacteriaceae</taxon>
        <taxon>Escherichia</taxon>
    </lineage>
</organism>
<proteinExistence type="inferred from homology"/>